<feature type="chain" id="PRO_0000104821" description="Large ribosomal subunit protein uL15">
    <location>
        <begin position="1"/>
        <end position="146"/>
    </location>
</feature>
<feature type="region of interest" description="Disordered" evidence="2">
    <location>
        <begin position="1"/>
        <end position="57"/>
    </location>
</feature>
<feature type="compositionally biased region" description="Gly residues" evidence="2">
    <location>
        <begin position="23"/>
        <end position="35"/>
    </location>
</feature>
<proteinExistence type="inferred from homology"/>
<accession>Q8DS31</accession>
<protein>
    <recommendedName>
        <fullName evidence="1">Large ribosomal subunit protein uL15</fullName>
    </recommendedName>
    <alternativeName>
        <fullName evidence="3">50S ribosomal protein L15</fullName>
    </alternativeName>
</protein>
<gene>
    <name evidence="1" type="primary">rplO</name>
    <name type="ordered locus">SMU_2007</name>
</gene>
<dbReference type="EMBL" id="AE014133">
    <property type="protein sequence ID" value="AAN59611.1"/>
    <property type="molecule type" value="Genomic_DNA"/>
</dbReference>
<dbReference type="RefSeq" id="NP_722305.1">
    <property type="nucleotide sequence ID" value="NC_004350.2"/>
</dbReference>
<dbReference type="RefSeq" id="WP_002262321.1">
    <property type="nucleotide sequence ID" value="NC_004350.2"/>
</dbReference>
<dbReference type="SMR" id="Q8DS31"/>
<dbReference type="STRING" id="210007.SMU_2007"/>
<dbReference type="GeneID" id="93860210"/>
<dbReference type="KEGG" id="smu:SMU_2007"/>
<dbReference type="PATRIC" id="fig|210007.7.peg.1788"/>
<dbReference type="eggNOG" id="COG0200">
    <property type="taxonomic scope" value="Bacteria"/>
</dbReference>
<dbReference type="HOGENOM" id="CLU_055188_4_2_9"/>
<dbReference type="OrthoDB" id="9810293at2"/>
<dbReference type="PhylomeDB" id="Q8DS31"/>
<dbReference type="Proteomes" id="UP000002512">
    <property type="component" value="Chromosome"/>
</dbReference>
<dbReference type="GO" id="GO:0022625">
    <property type="term" value="C:cytosolic large ribosomal subunit"/>
    <property type="evidence" value="ECO:0007669"/>
    <property type="project" value="TreeGrafter"/>
</dbReference>
<dbReference type="GO" id="GO:0019843">
    <property type="term" value="F:rRNA binding"/>
    <property type="evidence" value="ECO:0007669"/>
    <property type="project" value="UniProtKB-UniRule"/>
</dbReference>
<dbReference type="GO" id="GO:0003735">
    <property type="term" value="F:structural constituent of ribosome"/>
    <property type="evidence" value="ECO:0007669"/>
    <property type="project" value="InterPro"/>
</dbReference>
<dbReference type="GO" id="GO:0006412">
    <property type="term" value="P:translation"/>
    <property type="evidence" value="ECO:0007669"/>
    <property type="project" value="UniProtKB-UniRule"/>
</dbReference>
<dbReference type="FunFam" id="3.100.10.10:FF:000004">
    <property type="entry name" value="50S ribosomal protein L15"/>
    <property type="match status" value="1"/>
</dbReference>
<dbReference type="Gene3D" id="3.100.10.10">
    <property type="match status" value="1"/>
</dbReference>
<dbReference type="HAMAP" id="MF_01341">
    <property type="entry name" value="Ribosomal_uL15"/>
    <property type="match status" value="1"/>
</dbReference>
<dbReference type="InterPro" id="IPR030878">
    <property type="entry name" value="Ribosomal_uL15"/>
</dbReference>
<dbReference type="InterPro" id="IPR021131">
    <property type="entry name" value="Ribosomal_uL15/eL18"/>
</dbReference>
<dbReference type="InterPro" id="IPR036227">
    <property type="entry name" value="Ribosomal_uL15/eL18_sf"/>
</dbReference>
<dbReference type="InterPro" id="IPR005749">
    <property type="entry name" value="Ribosomal_uL15_bac-type"/>
</dbReference>
<dbReference type="InterPro" id="IPR001196">
    <property type="entry name" value="Ribosomal_uL15_CS"/>
</dbReference>
<dbReference type="NCBIfam" id="TIGR01071">
    <property type="entry name" value="rplO_bact"/>
    <property type="match status" value="1"/>
</dbReference>
<dbReference type="PANTHER" id="PTHR12934">
    <property type="entry name" value="50S RIBOSOMAL PROTEIN L15"/>
    <property type="match status" value="1"/>
</dbReference>
<dbReference type="PANTHER" id="PTHR12934:SF11">
    <property type="entry name" value="LARGE RIBOSOMAL SUBUNIT PROTEIN UL15M"/>
    <property type="match status" value="1"/>
</dbReference>
<dbReference type="Pfam" id="PF00828">
    <property type="entry name" value="Ribosomal_L27A"/>
    <property type="match status" value="1"/>
</dbReference>
<dbReference type="SUPFAM" id="SSF52080">
    <property type="entry name" value="Ribosomal proteins L15p and L18e"/>
    <property type="match status" value="1"/>
</dbReference>
<dbReference type="PROSITE" id="PS00475">
    <property type="entry name" value="RIBOSOMAL_L15"/>
    <property type="match status" value="1"/>
</dbReference>
<evidence type="ECO:0000255" key="1">
    <source>
        <dbReference type="HAMAP-Rule" id="MF_01341"/>
    </source>
</evidence>
<evidence type="ECO:0000256" key="2">
    <source>
        <dbReference type="SAM" id="MobiDB-lite"/>
    </source>
</evidence>
<evidence type="ECO:0000305" key="3"/>
<organism>
    <name type="scientific">Streptococcus mutans serotype c (strain ATCC 700610 / UA159)</name>
    <dbReference type="NCBI Taxonomy" id="210007"/>
    <lineage>
        <taxon>Bacteria</taxon>
        <taxon>Bacillati</taxon>
        <taxon>Bacillota</taxon>
        <taxon>Bacilli</taxon>
        <taxon>Lactobacillales</taxon>
        <taxon>Streptococcaceae</taxon>
        <taxon>Streptococcus</taxon>
    </lineage>
</organism>
<reference key="1">
    <citation type="journal article" date="2002" name="Proc. Natl. Acad. Sci. U.S.A.">
        <title>Genome sequence of Streptococcus mutans UA159, a cariogenic dental pathogen.</title>
        <authorList>
            <person name="Ajdic D.J."/>
            <person name="McShan W.M."/>
            <person name="McLaughlin R.E."/>
            <person name="Savic G."/>
            <person name="Chang J."/>
            <person name="Carson M.B."/>
            <person name="Primeaux C."/>
            <person name="Tian R."/>
            <person name="Kenton S."/>
            <person name="Jia H.G."/>
            <person name="Lin S.P."/>
            <person name="Qian Y."/>
            <person name="Li S."/>
            <person name="Zhu H."/>
            <person name="Najar F.Z."/>
            <person name="Lai H."/>
            <person name="White J."/>
            <person name="Roe B.A."/>
            <person name="Ferretti J.J."/>
        </authorList>
    </citation>
    <scope>NUCLEOTIDE SEQUENCE [LARGE SCALE GENOMIC DNA]</scope>
    <source>
        <strain>ATCC 700610 / UA159</strain>
    </source>
</reference>
<comment type="function">
    <text evidence="1">Binds to the 23S rRNA.</text>
</comment>
<comment type="subunit">
    <text evidence="1">Part of the 50S ribosomal subunit.</text>
</comment>
<comment type="similarity">
    <text evidence="1">Belongs to the universal ribosomal protein uL15 family.</text>
</comment>
<sequence>MKLHELKPAQGSRKTRNRVGRGSSSGNGKTAGRGQKGQKARSGGNIRSGFEGGQTPLFRRLPKRGFTNINAKEYALVNLDQLNVFEDGAEVTPVVLVETGIVKAEKSGIKILGNGELTKKLTVKAAKFSKSAEAAIIAKGGSIEVI</sequence>
<keyword id="KW-1185">Reference proteome</keyword>
<keyword id="KW-0687">Ribonucleoprotein</keyword>
<keyword id="KW-0689">Ribosomal protein</keyword>
<keyword id="KW-0694">RNA-binding</keyword>
<keyword id="KW-0699">rRNA-binding</keyword>
<name>RL15_STRMU</name>